<accession>C3L730</accession>
<reference key="1">
    <citation type="submission" date="2008-10" db="EMBL/GenBank/DDBJ databases">
        <title>Genome sequence of Bacillus anthracis str. CDC 684.</title>
        <authorList>
            <person name="Dodson R.J."/>
            <person name="Munk A.C."/>
            <person name="Brettin T."/>
            <person name="Bruce D."/>
            <person name="Detter C."/>
            <person name="Tapia R."/>
            <person name="Han C."/>
            <person name="Sutton G."/>
            <person name="Sims D."/>
        </authorList>
    </citation>
    <scope>NUCLEOTIDE SEQUENCE [LARGE SCALE GENOMIC DNA]</scope>
    <source>
        <strain>CDC 684 / NRRL 3495</strain>
    </source>
</reference>
<dbReference type="EC" id="6.1.1.5" evidence="1"/>
<dbReference type="EMBL" id="CP001215">
    <property type="protein sequence ID" value="ACP12348.1"/>
    <property type="molecule type" value="Genomic_DNA"/>
</dbReference>
<dbReference type="SMR" id="C3L730"/>
<dbReference type="KEGG" id="bah:BAMEG_0593"/>
<dbReference type="HOGENOM" id="CLU_001493_7_0_9"/>
<dbReference type="GO" id="GO:0005829">
    <property type="term" value="C:cytosol"/>
    <property type="evidence" value="ECO:0007669"/>
    <property type="project" value="TreeGrafter"/>
</dbReference>
<dbReference type="GO" id="GO:0002161">
    <property type="term" value="F:aminoacyl-tRNA deacylase activity"/>
    <property type="evidence" value="ECO:0007669"/>
    <property type="project" value="InterPro"/>
</dbReference>
<dbReference type="GO" id="GO:0005524">
    <property type="term" value="F:ATP binding"/>
    <property type="evidence" value="ECO:0007669"/>
    <property type="project" value="UniProtKB-UniRule"/>
</dbReference>
<dbReference type="GO" id="GO:0004822">
    <property type="term" value="F:isoleucine-tRNA ligase activity"/>
    <property type="evidence" value="ECO:0007669"/>
    <property type="project" value="UniProtKB-UniRule"/>
</dbReference>
<dbReference type="GO" id="GO:0000049">
    <property type="term" value="F:tRNA binding"/>
    <property type="evidence" value="ECO:0007669"/>
    <property type="project" value="InterPro"/>
</dbReference>
<dbReference type="GO" id="GO:0008270">
    <property type="term" value="F:zinc ion binding"/>
    <property type="evidence" value="ECO:0007669"/>
    <property type="project" value="UniProtKB-UniRule"/>
</dbReference>
<dbReference type="GO" id="GO:0006428">
    <property type="term" value="P:isoleucyl-tRNA aminoacylation"/>
    <property type="evidence" value="ECO:0007669"/>
    <property type="project" value="UniProtKB-UniRule"/>
</dbReference>
<dbReference type="CDD" id="cd07960">
    <property type="entry name" value="Anticodon_Ia_Ile_BEm"/>
    <property type="match status" value="1"/>
</dbReference>
<dbReference type="CDD" id="cd00818">
    <property type="entry name" value="IleRS_core"/>
    <property type="match status" value="1"/>
</dbReference>
<dbReference type="FunFam" id="1.10.10.830:FF:000001">
    <property type="entry name" value="Isoleucine--tRNA ligase"/>
    <property type="match status" value="1"/>
</dbReference>
<dbReference type="FunFam" id="1.10.730.20:FF:000001">
    <property type="entry name" value="Isoleucine--tRNA ligase"/>
    <property type="match status" value="1"/>
</dbReference>
<dbReference type="FunFam" id="3.40.50.620:FF:000152">
    <property type="entry name" value="Isoleucine--tRNA ligase"/>
    <property type="match status" value="1"/>
</dbReference>
<dbReference type="FunFam" id="3.90.740.10:FF:000006">
    <property type="entry name" value="Isoleucine--tRNA ligase"/>
    <property type="match status" value="1"/>
</dbReference>
<dbReference type="Gene3D" id="1.10.730.20">
    <property type="match status" value="1"/>
</dbReference>
<dbReference type="Gene3D" id="3.40.50.620">
    <property type="entry name" value="HUPs"/>
    <property type="match status" value="2"/>
</dbReference>
<dbReference type="Gene3D" id="1.10.10.830">
    <property type="entry name" value="Ile-tRNA synthetase CP2 domain-like"/>
    <property type="match status" value="1"/>
</dbReference>
<dbReference type="Gene3D" id="3.90.740.10">
    <property type="entry name" value="Valyl/Leucyl/Isoleucyl-tRNA synthetase, editing domain"/>
    <property type="match status" value="1"/>
</dbReference>
<dbReference type="HAMAP" id="MF_02002">
    <property type="entry name" value="Ile_tRNA_synth_type1"/>
    <property type="match status" value="1"/>
</dbReference>
<dbReference type="InterPro" id="IPR001412">
    <property type="entry name" value="aa-tRNA-synth_I_CS"/>
</dbReference>
<dbReference type="InterPro" id="IPR002300">
    <property type="entry name" value="aa-tRNA-synth_Ia"/>
</dbReference>
<dbReference type="InterPro" id="IPR033708">
    <property type="entry name" value="Anticodon_Ile_BEm"/>
</dbReference>
<dbReference type="InterPro" id="IPR002301">
    <property type="entry name" value="Ile-tRNA-ligase"/>
</dbReference>
<dbReference type="InterPro" id="IPR023585">
    <property type="entry name" value="Ile-tRNA-ligase_type1"/>
</dbReference>
<dbReference type="InterPro" id="IPR050081">
    <property type="entry name" value="Ile-tRNA_ligase"/>
</dbReference>
<dbReference type="InterPro" id="IPR013155">
    <property type="entry name" value="M/V/L/I-tRNA-synth_anticd-bd"/>
</dbReference>
<dbReference type="InterPro" id="IPR014729">
    <property type="entry name" value="Rossmann-like_a/b/a_fold"/>
</dbReference>
<dbReference type="InterPro" id="IPR009080">
    <property type="entry name" value="tRNAsynth_Ia_anticodon-bd"/>
</dbReference>
<dbReference type="InterPro" id="IPR009008">
    <property type="entry name" value="Val/Leu/Ile-tRNA-synth_edit"/>
</dbReference>
<dbReference type="InterPro" id="IPR010663">
    <property type="entry name" value="Znf_FPG/IleRS"/>
</dbReference>
<dbReference type="NCBIfam" id="TIGR00392">
    <property type="entry name" value="ileS"/>
    <property type="match status" value="1"/>
</dbReference>
<dbReference type="PANTHER" id="PTHR42765:SF1">
    <property type="entry name" value="ISOLEUCINE--TRNA LIGASE, MITOCHONDRIAL"/>
    <property type="match status" value="1"/>
</dbReference>
<dbReference type="PANTHER" id="PTHR42765">
    <property type="entry name" value="SOLEUCYL-TRNA SYNTHETASE"/>
    <property type="match status" value="1"/>
</dbReference>
<dbReference type="Pfam" id="PF08264">
    <property type="entry name" value="Anticodon_1"/>
    <property type="match status" value="1"/>
</dbReference>
<dbReference type="Pfam" id="PF00133">
    <property type="entry name" value="tRNA-synt_1"/>
    <property type="match status" value="1"/>
</dbReference>
<dbReference type="Pfam" id="PF06827">
    <property type="entry name" value="zf-FPG_IleRS"/>
    <property type="match status" value="1"/>
</dbReference>
<dbReference type="PRINTS" id="PR00984">
    <property type="entry name" value="TRNASYNTHILE"/>
</dbReference>
<dbReference type="SUPFAM" id="SSF47323">
    <property type="entry name" value="Anticodon-binding domain of a subclass of class I aminoacyl-tRNA synthetases"/>
    <property type="match status" value="1"/>
</dbReference>
<dbReference type="SUPFAM" id="SSF52374">
    <property type="entry name" value="Nucleotidylyl transferase"/>
    <property type="match status" value="1"/>
</dbReference>
<dbReference type="SUPFAM" id="SSF50677">
    <property type="entry name" value="ValRS/IleRS/LeuRS editing domain"/>
    <property type="match status" value="1"/>
</dbReference>
<dbReference type="PROSITE" id="PS00178">
    <property type="entry name" value="AA_TRNA_LIGASE_I"/>
    <property type="match status" value="1"/>
</dbReference>
<name>SYI_BACAC</name>
<proteinExistence type="inferred from homology"/>
<evidence type="ECO:0000255" key="1">
    <source>
        <dbReference type="HAMAP-Rule" id="MF_02002"/>
    </source>
</evidence>
<gene>
    <name evidence="1" type="primary">ileS</name>
    <name type="ordered locus">BAMEG_0593</name>
</gene>
<organism>
    <name type="scientific">Bacillus anthracis (strain CDC 684 / NRRL 3495)</name>
    <dbReference type="NCBI Taxonomy" id="568206"/>
    <lineage>
        <taxon>Bacteria</taxon>
        <taxon>Bacillati</taxon>
        <taxon>Bacillota</taxon>
        <taxon>Bacilli</taxon>
        <taxon>Bacillales</taxon>
        <taxon>Bacillaceae</taxon>
        <taxon>Bacillus</taxon>
        <taxon>Bacillus cereus group</taxon>
    </lineage>
</organism>
<sequence length="921" mass="104611">MEYKNTLLMPKTEFPMRGNLPKREPAMQEKWAEMNIYETVQEHTKGRPLFVLHDGPPYANGDIHMGHALNKVLKDFIVRYKSMTGFCAPYVPGWDTHGLPIEQALTNKGVKRKEMTVAEFRKLCAEYAYEQVERQREQFKRLGVRADWDNPYITLEPAYEAQQIKVFGDMAKKGYIYKGQKPVYWSPTSESALAEAEIEYQDKKSASIYVAFSVKDGKNVLEGDEKYIIWTTTPWTLPANLGISVHPELEYAIVKVNDEKYIIASELFETVAKTLEWENAEVVKTVKGSELEYTVAKHPFYDRDSLVMLGDHVTTDAGTGCVHTAPGHGEDDFIVGKKYGLEVLCPVDDKGVLTEEAPGFEGLFYDKANKPITEKLEEVGALLKLTFITHSYPHDWRTKKPIIFRATAQWFASIEAFRKELLEAVAETKWVPAWGETRLHNMVRDRGDWCISRQRAWGVPIPVFYAENGDPIITDETINHVADLFREHGSNVWFEREAKDLLPEGFTHPGSPNGEFRKETDIMDVWFDSGSSHQAVLEERDDLQRPADLYLEGSDQYRGWFNSSLSTAVAVTGKAPYKGVLSHGFVLDGEGRKMSKSIGNIVVPKKIMDQLGGDILRLWVSSVDYQSDVRISDDILKQVAEVYRKIRNTFRFLLGNLDDFKPSENTVAVAELREVDRYMLVKLNDLITKVKEAYETYDFAAVYHAIHNFCTIDLSSFYLDFAKDILYIEGANHEDRRAIQTVLYDVLVALTKLVTPILPHTADEVWPYIPGVTEESVQLTDMPEAVQLDDAEALKTKWDAFMTLRDDVLKALEVARNEKVIGKSLNASITLYPTAEMKAMLESINEDLKQLFIVSEYKLGGMMEEAPADAPKYEHTAVVVAQATGETCERCWVVSETIGKDAEHETLCERCATVVKENYVK</sequence>
<feature type="chain" id="PRO_1000189122" description="Isoleucine--tRNA ligase">
    <location>
        <begin position="1"/>
        <end position="921"/>
    </location>
</feature>
<feature type="short sequence motif" description="'HIGH' region">
    <location>
        <begin position="57"/>
        <end position="67"/>
    </location>
</feature>
<feature type="short sequence motif" description="'KMSKS' region">
    <location>
        <begin position="593"/>
        <end position="597"/>
    </location>
</feature>
<feature type="binding site" evidence="1">
    <location>
        <position position="552"/>
    </location>
    <ligand>
        <name>L-isoleucyl-5'-AMP</name>
        <dbReference type="ChEBI" id="CHEBI:178002"/>
    </ligand>
</feature>
<feature type="binding site" evidence="1">
    <location>
        <position position="596"/>
    </location>
    <ligand>
        <name>ATP</name>
        <dbReference type="ChEBI" id="CHEBI:30616"/>
    </ligand>
</feature>
<feature type="binding site" evidence="1">
    <location>
        <position position="888"/>
    </location>
    <ligand>
        <name>Zn(2+)</name>
        <dbReference type="ChEBI" id="CHEBI:29105"/>
    </ligand>
</feature>
<feature type="binding site" evidence="1">
    <location>
        <position position="891"/>
    </location>
    <ligand>
        <name>Zn(2+)</name>
        <dbReference type="ChEBI" id="CHEBI:29105"/>
    </ligand>
</feature>
<feature type="binding site" evidence="1">
    <location>
        <position position="908"/>
    </location>
    <ligand>
        <name>Zn(2+)</name>
        <dbReference type="ChEBI" id="CHEBI:29105"/>
    </ligand>
</feature>
<feature type="binding site" evidence="1">
    <location>
        <position position="911"/>
    </location>
    <ligand>
        <name>Zn(2+)</name>
        <dbReference type="ChEBI" id="CHEBI:29105"/>
    </ligand>
</feature>
<comment type="function">
    <text evidence="1">Catalyzes the attachment of isoleucine to tRNA(Ile). As IleRS can inadvertently accommodate and process structurally similar amino acids such as valine, to avoid such errors it has two additional distinct tRNA(Ile)-dependent editing activities. One activity is designated as 'pretransfer' editing and involves the hydrolysis of activated Val-AMP. The other activity is designated 'posttransfer' editing and involves deacylation of mischarged Val-tRNA(Ile).</text>
</comment>
<comment type="catalytic activity">
    <reaction evidence="1">
        <text>tRNA(Ile) + L-isoleucine + ATP = L-isoleucyl-tRNA(Ile) + AMP + diphosphate</text>
        <dbReference type="Rhea" id="RHEA:11060"/>
        <dbReference type="Rhea" id="RHEA-COMP:9666"/>
        <dbReference type="Rhea" id="RHEA-COMP:9695"/>
        <dbReference type="ChEBI" id="CHEBI:30616"/>
        <dbReference type="ChEBI" id="CHEBI:33019"/>
        <dbReference type="ChEBI" id="CHEBI:58045"/>
        <dbReference type="ChEBI" id="CHEBI:78442"/>
        <dbReference type="ChEBI" id="CHEBI:78528"/>
        <dbReference type="ChEBI" id="CHEBI:456215"/>
        <dbReference type="EC" id="6.1.1.5"/>
    </reaction>
</comment>
<comment type="cofactor">
    <cofactor evidence="1">
        <name>Zn(2+)</name>
        <dbReference type="ChEBI" id="CHEBI:29105"/>
    </cofactor>
    <text evidence="1">Binds 1 zinc ion per subunit.</text>
</comment>
<comment type="subunit">
    <text evidence="1">Monomer.</text>
</comment>
<comment type="subcellular location">
    <subcellularLocation>
        <location evidence="1">Cytoplasm</location>
    </subcellularLocation>
</comment>
<comment type="domain">
    <text evidence="1">IleRS has two distinct active sites: one for aminoacylation and one for editing. The misactivated valine is translocated from the active site to the editing site, which sterically excludes the correctly activated isoleucine. The single editing site contains two valyl binding pockets, one specific for each substrate (Val-AMP or Val-tRNA(Ile)).</text>
</comment>
<comment type="similarity">
    <text evidence="1">Belongs to the class-I aminoacyl-tRNA synthetase family. IleS type 1 subfamily.</text>
</comment>
<protein>
    <recommendedName>
        <fullName evidence="1">Isoleucine--tRNA ligase</fullName>
        <ecNumber evidence="1">6.1.1.5</ecNumber>
    </recommendedName>
    <alternativeName>
        <fullName evidence="1">Isoleucyl-tRNA synthetase</fullName>
        <shortName evidence="1">IleRS</shortName>
    </alternativeName>
</protein>
<keyword id="KW-0030">Aminoacyl-tRNA synthetase</keyword>
<keyword id="KW-0067">ATP-binding</keyword>
<keyword id="KW-0963">Cytoplasm</keyword>
<keyword id="KW-0436">Ligase</keyword>
<keyword id="KW-0479">Metal-binding</keyword>
<keyword id="KW-0547">Nucleotide-binding</keyword>
<keyword id="KW-0648">Protein biosynthesis</keyword>
<keyword id="KW-0862">Zinc</keyword>